<proteinExistence type="evidence at protein level"/>
<protein>
    <recommendedName>
        <fullName evidence="11">Glucoamylase ARB_02327-1</fullName>
        <ecNumber evidence="2">3.2.1.3</ecNumber>
    </recommendedName>
    <alternativeName>
        <fullName evidence="2">1,4-alpha-D-glucan glucohydrolase</fullName>
    </alternativeName>
    <alternativeName>
        <fullName evidence="2">Glucan 1,4-alpha-glucosidase</fullName>
    </alternativeName>
    <allergenName evidence="10">Sch c 1</allergenName>
</protein>
<comment type="catalytic activity">
    <reaction evidence="2">
        <text>Hydrolysis of terminal (1-&gt;4)-linked alpha-D-glucose residues successively from non-reducing ends of the chains with release of beta-D-glucose.</text>
        <dbReference type="EC" id="3.2.1.3"/>
    </reaction>
</comment>
<comment type="subcellular location">
    <subcellularLocation>
        <location evidence="1">Secreted</location>
    </subcellularLocation>
</comment>
<comment type="allergen">
    <text evidence="9">Major allergen that causes an allergic reaction in human. Binds to IgE and IgG.</text>
</comment>
<comment type="similarity">
    <text evidence="11">Belongs to the glycosyl hydrolase 15 family.</text>
</comment>
<name>AMYG_SCHCM</name>
<feature type="signal peptide" evidence="3">
    <location>
        <begin position="1"/>
        <end position="20"/>
    </location>
</feature>
<feature type="chain" id="PRO_0000434423" description="Glucoamylase ARB_02327-1" evidence="3">
    <location>
        <begin position="21"/>
        <end position="576"/>
    </location>
</feature>
<feature type="domain" description="CBM20" evidence="6">
    <location>
        <begin position="477"/>
        <end position="576"/>
    </location>
</feature>
<feature type="region of interest" description="Disordered" evidence="8">
    <location>
        <begin position="552"/>
        <end position="576"/>
    </location>
</feature>
<feature type="active site" description="Proton acceptor" evidence="7">
    <location>
        <position position="197"/>
    </location>
</feature>
<feature type="active site" description="Proton donor" evidence="7">
    <location>
        <position position="200"/>
    </location>
</feature>
<feature type="binding site" evidence="4">
    <location>
        <position position="141"/>
    </location>
    <ligand>
        <name>substrate</name>
    </ligand>
</feature>
<feature type="glycosylation site" description="N-linked (GlcNAc...) asparagine" evidence="5">
    <location>
        <position position="168"/>
    </location>
</feature>
<feature type="glycosylation site" description="N-linked (GlcNAc...) asparagine" evidence="5">
    <location>
        <position position="192"/>
    </location>
</feature>
<feature type="glycosylation site" description="N-linked (GlcNAc...) asparagine" evidence="5">
    <location>
        <position position="558"/>
    </location>
</feature>
<feature type="glycosylation site" description="N-linked (GlcNAc...) asparagine" evidence="5">
    <location>
        <position position="572"/>
    </location>
</feature>
<feature type="disulfide bond" evidence="2">
    <location>
        <begin position="243"/>
        <end position="470"/>
    </location>
</feature>
<feature type="disulfide bond" evidence="2">
    <location>
        <begin position="285"/>
        <end position="293"/>
    </location>
</feature>
<sequence>MGLASTVSLALLGLCSLARAQTSAADAYVSAESPIAQAGILANIGPSGSKSHGAASGVIIASPSTSNPDYLYTWTRDAALVSRALVDEFIEGESSLQSVIDSYVSSQQKLQRVDNPSGSYTSGGLGEPKFNIDLTAFTGAWGRPQRDGPALRAITLITYGNHLLSSGNTSYVTDTIWPVVKADLDYVVSYWNQTGFDLWEEVSSSSFFTTAEQHTALRLGATFATAVGASASTYLTQADNVLCFLQSYWNSNGGYATANTGGGRSGIDANTVLTSIHTFDIEAGCDSVTFQPCSDRALSNLKVYVDSFRGLYSINPTGATDPILTGRYKEDVYYNGNPWYLTTFAVAEQLYDALNTWDKLGSLDVTSTSLAFFKQFDSSITAGTYASSTSEYATLTSAIRNWADGFLEVLADFTPADGGLTEQIDKSSGNPTSAADLTWSYASAITAFKARGGAIPASWGAAGLTVPATCSTGGGGGSGGDTVAVTLNVQATTVYGENIYVTGSVNQLANWSPDNAIALNADNYPTWSVTVNLPANTQIEYKYIRKNNGQVTWESDPNRSITTSASGSFTQNDTWR</sequence>
<dbReference type="EC" id="3.2.1.3" evidence="2"/>
<dbReference type="EMBL" id="GL377308">
    <property type="protein sequence ID" value="EFI95688.1"/>
    <property type="molecule type" value="Genomic_DNA"/>
</dbReference>
<dbReference type="RefSeq" id="XP_003030591.1">
    <property type="nucleotide sequence ID" value="XM_003030545.1"/>
</dbReference>
<dbReference type="SMR" id="D8Q9M3"/>
<dbReference type="FunCoup" id="D8Q9M3">
    <property type="interactions" value="61"/>
</dbReference>
<dbReference type="STRING" id="578458.D8Q9M3"/>
<dbReference type="Allergome" id="10126">
    <property type="allergen name" value="Sch c 1"/>
</dbReference>
<dbReference type="Allergome" id="10127">
    <property type="allergen name" value="Sch c 1.0101"/>
</dbReference>
<dbReference type="GeneID" id="9591574"/>
<dbReference type="KEGG" id="scm:SCHCO_02631634"/>
<dbReference type="VEuPathDB" id="FungiDB:SCHCODRAFT_02631634"/>
<dbReference type="eggNOG" id="ENOG502QPM2">
    <property type="taxonomic scope" value="Eukaryota"/>
</dbReference>
<dbReference type="HOGENOM" id="CLU_012173_2_1_1"/>
<dbReference type="InParanoid" id="D8Q9M3"/>
<dbReference type="OMA" id="NRKYTVP"/>
<dbReference type="OrthoDB" id="6123450at2759"/>
<dbReference type="Proteomes" id="UP000007431">
    <property type="component" value="Unassembled WGS sequence"/>
</dbReference>
<dbReference type="GO" id="GO:0005576">
    <property type="term" value="C:extracellular region"/>
    <property type="evidence" value="ECO:0007669"/>
    <property type="project" value="UniProtKB-SubCell"/>
</dbReference>
<dbReference type="GO" id="GO:0000324">
    <property type="term" value="C:fungal-type vacuole"/>
    <property type="evidence" value="ECO:0007669"/>
    <property type="project" value="TreeGrafter"/>
</dbReference>
<dbReference type="GO" id="GO:0004339">
    <property type="term" value="F:glucan 1,4-alpha-glucosidase activity"/>
    <property type="evidence" value="ECO:0007669"/>
    <property type="project" value="UniProtKB-EC"/>
</dbReference>
<dbReference type="GO" id="GO:2001070">
    <property type="term" value="F:starch binding"/>
    <property type="evidence" value="ECO:0007669"/>
    <property type="project" value="InterPro"/>
</dbReference>
<dbReference type="GO" id="GO:0000272">
    <property type="term" value="P:polysaccharide catabolic process"/>
    <property type="evidence" value="ECO:0007669"/>
    <property type="project" value="UniProtKB-KW"/>
</dbReference>
<dbReference type="CDD" id="cd05808">
    <property type="entry name" value="CBM20_alpha_amylase"/>
    <property type="match status" value="1"/>
</dbReference>
<dbReference type="FunFam" id="1.50.10.10:FF:000018">
    <property type="entry name" value="Glucoamylase"/>
    <property type="match status" value="1"/>
</dbReference>
<dbReference type="FunFam" id="2.60.40.10:FF:000552">
    <property type="entry name" value="Related to glucoamylase"/>
    <property type="match status" value="1"/>
</dbReference>
<dbReference type="Gene3D" id="1.50.10.10">
    <property type="match status" value="1"/>
</dbReference>
<dbReference type="Gene3D" id="2.60.40.10">
    <property type="entry name" value="Immunoglobulins"/>
    <property type="match status" value="1"/>
</dbReference>
<dbReference type="InterPro" id="IPR008928">
    <property type="entry name" value="6-hairpin_glycosidase_sf"/>
</dbReference>
<dbReference type="InterPro" id="IPR012341">
    <property type="entry name" value="6hp_glycosidase-like_sf"/>
</dbReference>
<dbReference type="InterPro" id="IPR013784">
    <property type="entry name" value="Carb-bd-like_fold"/>
</dbReference>
<dbReference type="InterPro" id="IPR002044">
    <property type="entry name" value="CBM20"/>
</dbReference>
<dbReference type="InterPro" id="IPR011613">
    <property type="entry name" value="GH15-like"/>
</dbReference>
<dbReference type="InterPro" id="IPR000165">
    <property type="entry name" value="Glucoamylase"/>
</dbReference>
<dbReference type="InterPro" id="IPR046966">
    <property type="entry name" value="Glucoamylase_active_site"/>
</dbReference>
<dbReference type="InterPro" id="IPR008291">
    <property type="entry name" value="Glucoamylase_SBD"/>
</dbReference>
<dbReference type="InterPro" id="IPR013783">
    <property type="entry name" value="Ig-like_fold"/>
</dbReference>
<dbReference type="PANTHER" id="PTHR31616:SF12">
    <property type="entry name" value="GLUCOAMYLASE"/>
    <property type="match status" value="1"/>
</dbReference>
<dbReference type="PANTHER" id="PTHR31616">
    <property type="entry name" value="TREHALASE"/>
    <property type="match status" value="1"/>
</dbReference>
<dbReference type="Pfam" id="PF00686">
    <property type="entry name" value="CBM_20"/>
    <property type="match status" value="1"/>
</dbReference>
<dbReference type="Pfam" id="PF00723">
    <property type="entry name" value="Glyco_hydro_15"/>
    <property type="match status" value="1"/>
</dbReference>
<dbReference type="PIRSF" id="PIRSF001031">
    <property type="entry name" value="Glu-a-glcsd_SBD"/>
    <property type="match status" value="1"/>
</dbReference>
<dbReference type="PRINTS" id="PR00736">
    <property type="entry name" value="GLHYDRLASE15"/>
</dbReference>
<dbReference type="SMART" id="SM01065">
    <property type="entry name" value="CBM_2"/>
    <property type="match status" value="1"/>
</dbReference>
<dbReference type="SUPFAM" id="SSF48208">
    <property type="entry name" value="Six-hairpin glycosidases"/>
    <property type="match status" value="1"/>
</dbReference>
<dbReference type="SUPFAM" id="SSF49452">
    <property type="entry name" value="Starch-binding domain-like"/>
    <property type="match status" value="1"/>
</dbReference>
<dbReference type="PROSITE" id="PS51166">
    <property type="entry name" value="CBM20"/>
    <property type="match status" value="1"/>
</dbReference>
<dbReference type="PROSITE" id="PS00820">
    <property type="entry name" value="GLUCOAMYLASE"/>
    <property type="match status" value="1"/>
</dbReference>
<evidence type="ECO:0000250" key="1">
    <source>
        <dbReference type="UniProtKB" id="P0DN29"/>
    </source>
</evidence>
<evidence type="ECO:0000250" key="2">
    <source>
        <dbReference type="UniProtKB" id="P69327"/>
    </source>
</evidence>
<evidence type="ECO:0000255" key="3"/>
<evidence type="ECO:0000255" key="4">
    <source>
        <dbReference type="PIRSR" id="PIRSR001031-2"/>
    </source>
</evidence>
<evidence type="ECO:0000255" key="5">
    <source>
        <dbReference type="PROSITE-ProRule" id="PRU00498"/>
    </source>
</evidence>
<evidence type="ECO:0000255" key="6">
    <source>
        <dbReference type="PROSITE-ProRule" id="PRU00594"/>
    </source>
</evidence>
<evidence type="ECO:0000255" key="7">
    <source>
        <dbReference type="PROSITE-ProRule" id="PRU10051"/>
    </source>
</evidence>
<evidence type="ECO:0000256" key="8">
    <source>
        <dbReference type="SAM" id="MobiDB-lite"/>
    </source>
</evidence>
<evidence type="ECO:0000269" key="9">
    <source>
    </source>
</evidence>
<evidence type="ECO:0000303" key="10">
    <source>
    </source>
</evidence>
<evidence type="ECO:0000305" key="11"/>
<evidence type="ECO:0000312" key="12">
    <source>
        <dbReference type="Proteomes" id="UP000007431"/>
    </source>
</evidence>
<gene>
    <name type="ORF">SCHCODRAFT_57589</name>
</gene>
<reference key="1">
    <citation type="journal article" date="2010" name="Nat. Biotechnol.">
        <title>Genome sequence of the model mushroom Schizophyllum commune.</title>
        <authorList>
            <person name="Ohm R.A."/>
            <person name="de Jong J.F."/>
            <person name="Lugones L.G."/>
            <person name="Aerts A."/>
            <person name="Kothe E."/>
            <person name="Stajich J.E."/>
            <person name="de Vries R.P."/>
            <person name="Record E."/>
            <person name="Levasseur A."/>
            <person name="Baker S.E."/>
            <person name="Bartholomew K.A."/>
            <person name="Coutinho P.M."/>
            <person name="Erdmann S."/>
            <person name="Fowler T.J."/>
            <person name="Gathman A.C."/>
            <person name="Lombard V."/>
            <person name="Henrissat B."/>
            <person name="Knabe N."/>
            <person name="Kuees U."/>
            <person name="Lilly W.W."/>
            <person name="Lindquist E."/>
            <person name="Lucas S."/>
            <person name="Magnuson J.K."/>
            <person name="Piumi F."/>
            <person name="Raudaskoski M."/>
            <person name="Salamov A."/>
            <person name="Schmutz J."/>
            <person name="Schwarze F.W.M.R."/>
            <person name="vanKuyk P.A."/>
            <person name="Horton J.S."/>
            <person name="Grigoriev I.V."/>
            <person name="Woesten H.A.B."/>
        </authorList>
    </citation>
    <scope>NUCLEOTIDE SEQUENCE [LARGE SCALE GENOMIC DNA]</scope>
    <source>
        <strain evidence="12">H4-8 / FGSC 9210</strain>
    </source>
</reference>
<reference key="2">
    <citation type="journal article" date="2014" name="Clin. Exp. Allergy">
        <title>Glucoamylase is a major allergen of Schizophyllum commune.</title>
        <authorList>
            <person name="Toyotome T."/>
            <person name="Satoh M."/>
            <person name="Yahiro M."/>
            <person name="Watanabe A."/>
            <person name="Nomura F."/>
            <person name="Kamei K."/>
        </authorList>
    </citation>
    <scope>IDENTIFICATION BY MASS SPECTROMETRY</scope>
    <scope>ALLERGEN</scope>
</reference>
<accession>D8Q9M3</accession>
<keyword id="KW-0020">Allergen</keyword>
<keyword id="KW-0119">Carbohydrate metabolism</keyword>
<keyword id="KW-1015">Disulfide bond</keyword>
<keyword id="KW-0325">Glycoprotein</keyword>
<keyword id="KW-0326">Glycosidase</keyword>
<keyword id="KW-0378">Hydrolase</keyword>
<keyword id="KW-0624">Polysaccharide degradation</keyword>
<keyword id="KW-1185">Reference proteome</keyword>
<keyword id="KW-0964">Secreted</keyword>
<keyword id="KW-0732">Signal</keyword>
<organism evidence="12">
    <name type="scientific">Schizophyllum commune (strain H4-8 / FGSC 9210)</name>
    <name type="common">Split gill fungus</name>
    <dbReference type="NCBI Taxonomy" id="578458"/>
    <lineage>
        <taxon>Eukaryota</taxon>
        <taxon>Fungi</taxon>
        <taxon>Dikarya</taxon>
        <taxon>Basidiomycota</taxon>
        <taxon>Agaricomycotina</taxon>
        <taxon>Agaricomycetes</taxon>
        <taxon>Agaricomycetidae</taxon>
        <taxon>Agaricales</taxon>
        <taxon>Schizophyllaceae</taxon>
        <taxon>Schizophyllum</taxon>
    </lineage>
</organism>